<keyword id="KW-0028">Amino-acid biosynthesis</keyword>
<keyword id="KW-0057">Aromatic amino acid biosynthesis</keyword>
<keyword id="KW-0456">Lyase</keyword>
<keyword id="KW-1185">Reference proteome</keyword>
<dbReference type="EC" id="4.2.1.10"/>
<dbReference type="EMBL" id="AL646052">
    <property type="protein sequence ID" value="CAD16492.1"/>
    <property type="molecule type" value="Genomic_DNA"/>
</dbReference>
<dbReference type="RefSeq" id="WP_011002692.1">
    <property type="nucleotide sequence ID" value="NC_003295.1"/>
</dbReference>
<dbReference type="SMR" id="Q8XVP5"/>
<dbReference type="STRING" id="267608.RSc2785"/>
<dbReference type="EnsemblBacteria" id="CAD16492">
    <property type="protein sequence ID" value="CAD16492"/>
    <property type="gene ID" value="RSc2785"/>
</dbReference>
<dbReference type="KEGG" id="rso:RSc2785"/>
<dbReference type="PATRIC" id="fig|267608.8.peg.2834"/>
<dbReference type="eggNOG" id="COG0757">
    <property type="taxonomic scope" value="Bacteria"/>
</dbReference>
<dbReference type="HOGENOM" id="CLU_090968_1_0_4"/>
<dbReference type="UniPathway" id="UPA00053">
    <property type="reaction ID" value="UER00086"/>
</dbReference>
<dbReference type="Proteomes" id="UP000001436">
    <property type="component" value="Chromosome"/>
</dbReference>
<dbReference type="GO" id="GO:0003855">
    <property type="term" value="F:3-dehydroquinate dehydratase activity"/>
    <property type="evidence" value="ECO:0007669"/>
    <property type="project" value="UniProtKB-UniRule"/>
</dbReference>
<dbReference type="GO" id="GO:0008652">
    <property type="term" value="P:amino acid biosynthetic process"/>
    <property type="evidence" value="ECO:0007669"/>
    <property type="project" value="UniProtKB-KW"/>
</dbReference>
<dbReference type="GO" id="GO:0009073">
    <property type="term" value="P:aromatic amino acid family biosynthetic process"/>
    <property type="evidence" value="ECO:0007669"/>
    <property type="project" value="UniProtKB-KW"/>
</dbReference>
<dbReference type="GO" id="GO:0009423">
    <property type="term" value="P:chorismate biosynthetic process"/>
    <property type="evidence" value="ECO:0007669"/>
    <property type="project" value="UniProtKB-UniRule"/>
</dbReference>
<dbReference type="GO" id="GO:0019631">
    <property type="term" value="P:quinate catabolic process"/>
    <property type="evidence" value="ECO:0007669"/>
    <property type="project" value="TreeGrafter"/>
</dbReference>
<dbReference type="CDD" id="cd00466">
    <property type="entry name" value="DHQase_II"/>
    <property type="match status" value="1"/>
</dbReference>
<dbReference type="Gene3D" id="3.40.50.9100">
    <property type="entry name" value="Dehydroquinase, class II"/>
    <property type="match status" value="1"/>
</dbReference>
<dbReference type="HAMAP" id="MF_00169">
    <property type="entry name" value="AroQ"/>
    <property type="match status" value="1"/>
</dbReference>
<dbReference type="InterPro" id="IPR001874">
    <property type="entry name" value="DHquinase_II"/>
</dbReference>
<dbReference type="InterPro" id="IPR018509">
    <property type="entry name" value="DHquinase_II_CS"/>
</dbReference>
<dbReference type="InterPro" id="IPR036441">
    <property type="entry name" value="DHquinase_II_sf"/>
</dbReference>
<dbReference type="NCBIfam" id="TIGR01088">
    <property type="entry name" value="aroQ"/>
    <property type="match status" value="1"/>
</dbReference>
<dbReference type="NCBIfam" id="NF003804">
    <property type="entry name" value="PRK05395.1-1"/>
    <property type="match status" value="1"/>
</dbReference>
<dbReference type="NCBIfam" id="NF003805">
    <property type="entry name" value="PRK05395.1-2"/>
    <property type="match status" value="1"/>
</dbReference>
<dbReference type="NCBIfam" id="NF003806">
    <property type="entry name" value="PRK05395.1-3"/>
    <property type="match status" value="1"/>
</dbReference>
<dbReference type="NCBIfam" id="NF003807">
    <property type="entry name" value="PRK05395.1-4"/>
    <property type="match status" value="1"/>
</dbReference>
<dbReference type="PANTHER" id="PTHR21272">
    <property type="entry name" value="CATABOLIC 3-DEHYDROQUINASE"/>
    <property type="match status" value="1"/>
</dbReference>
<dbReference type="PANTHER" id="PTHR21272:SF3">
    <property type="entry name" value="CATABOLIC 3-DEHYDROQUINASE"/>
    <property type="match status" value="1"/>
</dbReference>
<dbReference type="Pfam" id="PF01220">
    <property type="entry name" value="DHquinase_II"/>
    <property type="match status" value="1"/>
</dbReference>
<dbReference type="PIRSF" id="PIRSF001399">
    <property type="entry name" value="DHquinase_II"/>
    <property type="match status" value="1"/>
</dbReference>
<dbReference type="SUPFAM" id="SSF52304">
    <property type="entry name" value="Type II 3-dehydroquinate dehydratase"/>
    <property type="match status" value="1"/>
</dbReference>
<dbReference type="PROSITE" id="PS01029">
    <property type="entry name" value="DEHYDROQUINASE_II"/>
    <property type="match status" value="1"/>
</dbReference>
<name>AROQ1_RALN1</name>
<sequence>MADKPIAKAAHSVLVLHGPNLNLLGTREPEIYGATTLADINAALAERASASGVSLAHFQSNHEGALVDRIQAAKSEGIAFIIINPAAYTHTSVALRDALAGVAIPYIEVHLSNVHRREPFRHHSYLADQAVGVICGLGWRGYLAALDYIVSQHGGG</sequence>
<gene>
    <name type="primary">aroQ1</name>
    <name type="ordered locus">RSc2785</name>
    <name type="ORF">RS00062</name>
</gene>
<accession>Q8XVP5</accession>
<comment type="function">
    <text evidence="1">Catalyzes a trans-dehydration via an enolate intermediate.</text>
</comment>
<comment type="catalytic activity">
    <reaction>
        <text>3-dehydroquinate = 3-dehydroshikimate + H2O</text>
        <dbReference type="Rhea" id="RHEA:21096"/>
        <dbReference type="ChEBI" id="CHEBI:15377"/>
        <dbReference type="ChEBI" id="CHEBI:16630"/>
        <dbReference type="ChEBI" id="CHEBI:32364"/>
        <dbReference type="EC" id="4.2.1.10"/>
    </reaction>
</comment>
<comment type="pathway">
    <text>Metabolic intermediate biosynthesis; chorismate biosynthesis; chorismate from D-erythrose 4-phosphate and phosphoenolpyruvate: step 3/7.</text>
</comment>
<comment type="subunit">
    <text evidence="1">Homododecamer.</text>
</comment>
<comment type="similarity">
    <text evidence="2">Belongs to the type-II 3-dehydroquinase family.</text>
</comment>
<protein>
    <recommendedName>
        <fullName>3-dehydroquinate dehydratase 1</fullName>
        <shortName>3-dehydroquinase 1</shortName>
        <ecNumber>4.2.1.10</ecNumber>
    </recommendedName>
    <alternativeName>
        <fullName>Type II DHQase 1</fullName>
    </alternativeName>
</protein>
<reference key="1">
    <citation type="journal article" date="2002" name="Nature">
        <title>Genome sequence of the plant pathogen Ralstonia solanacearum.</title>
        <authorList>
            <person name="Salanoubat M."/>
            <person name="Genin S."/>
            <person name="Artiguenave F."/>
            <person name="Gouzy J."/>
            <person name="Mangenot S."/>
            <person name="Arlat M."/>
            <person name="Billault A."/>
            <person name="Brottier P."/>
            <person name="Camus J.-C."/>
            <person name="Cattolico L."/>
            <person name="Chandler M."/>
            <person name="Choisne N."/>
            <person name="Claudel-Renard C."/>
            <person name="Cunnac S."/>
            <person name="Demange N."/>
            <person name="Gaspin C."/>
            <person name="Lavie M."/>
            <person name="Moisan A."/>
            <person name="Robert C."/>
            <person name="Saurin W."/>
            <person name="Schiex T."/>
            <person name="Siguier P."/>
            <person name="Thebault P."/>
            <person name="Whalen M."/>
            <person name="Wincker P."/>
            <person name="Levy M."/>
            <person name="Weissenbach J."/>
            <person name="Boucher C.A."/>
        </authorList>
    </citation>
    <scope>NUCLEOTIDE SEQUENCE [LARGE SCALE GENOMIC DNA]</scope>
    <source>
        <strain>ATCC BAA-1114 / GMI1000</strain>
    </source>
</reference>
<proteinExistence type="inferred from homology"/>
<organism>
    <name type="scientific">Ralstonia nicotianae (strain ATCC BAA-1114 / GMI1000)</name>
    <name type="common">Ralstonia solanacearum</name>
    <dbReference type="NCBI Taxonomy" id="267608"/>
    <lineage>
        <taxon>Bacteria</taxon>
        <taxon>Pseudomonadati</taxon>
        <taxon>Pseudomonadota</taxon>
        <taxon>Betaproteobacteria</taxon>
        <taxon>Burkholderiales</taxon>
        <taxon>Burkholderiaceae</taxon>
        <taxon>Ralstonia</taxon>
        <taxon>Ralstonia solanacearum species complex</taxon>
    </lineage>
</organism>
<evidence type="ECO:0000250" key="1"/>
<evidence type="ECO:0000305" key="2"/>
<feature type="chain" id="PRO_0000159923" description="3-dehydroquinate dehydratase 1">
    <location>
        <begin position="1"/>
        <end position="156"/>
    </location>
</feature>
<feature type="active site" description="Proton acceptor" evidence="1">
    <location>
        <position position="32"/>
    </location>
</feature>
<feature type="active site" description="Proton donor" evidence="1">
    <location>
        <position position="110"/>
    </location>
</feature>
<feature type="binding site" evidence="1">
    <location>
        <position position="84"/>
    </location>
    <ligand>
        <name>substrate</name>
    </ligand>
</feature>
<feature type="binding site" evidence="1">
    <location>
        <position position="90"/>
    </location>
    <ligand>
        <name>substrate</name>
    </ligand>
</feature>
<feature type="binding site" evidence="1">
    <location>
        <position position="97"/>
    </location>
    <ligand>
        <name>substrate</name>
    </ligand>
</feature>
<feature type="binding site" evidence="1">
    <location>
        <begin position="111"/>
        <end position="112"/>
    </location>
    <ligand>
        <name>substrate</name>
    </ligand>
</feature>
<feature type="binding site" evidence="1">
    <location>
        <position position="121"/>
    </location>
    <ligand>
        <name>substrate</name>
    </ligand>
</feature>
<feature type="site" description="Transition state stabilizer" evidence="1">
    <location>
        <position position="27"/>
    </location>
</feature>